<comment type="function">
    <text evidence="1">Catalyzes the phosphorylation of the position 2 hydroxy group of 4-diphosphocytidyl-2C-methyl-D-erythritol.</text>
</comment>
<comment type="catalytic activity">
    <reaction evidence="1">
        <text>4-CDP-2-C-methyl-D-erythritol + ATP = 4-CDP-2-C-methyl-D-erythritol 2-phosphate + ADP + H(+)</text>
        <dbReference type="Rhea" id="RHEA:18437"/>
        <dbReference type="ChEBI" id="CHEBI:15378"/>
        <dbReference type="ChEBI" id="CHEBI:30616"/>
        <dbReference type="ChEBI" id="CHEBI:57823"/>
        <dbReference type="ChEBI" id="CHEBI:57919"/>
        <dbReference type="ChEBI" id="CHEBI:456216"/>
        <dbReference type="EC" id="2.7.1.148"/>
    </reaction>
</comment>
<comment type="pathway">
    <text evidence="1">Isoprenoid biosynthesis; isopentenyl diphosphate biosynthesis via DXP pathway; isopentenyl diphosphate from 1-deoxy-D-xylulose 5-phosphate: step 3/6.</text>
</comment>
<comment type="similarity">
    <text evidence="1">Belongs to the GHMP kinase family. IspE subfamily.</text>
</comment>
<name>ISPE_SULSY</name>
<proteinExistence type="inferred from homology"/>
<protein>
    <recommendedName>
        <fullName evidence="1">4-diphosphocytidyl-2-C-methyl-D-erythritol kinase</fullName>
        <shortName evidence="1">CMK</shortName>
        <ecNumber evidence="1">2.7.1.148</ecNumber>
    </recommendedName>
    <alternativeName>
        <fullName evidence="1">4-(cytidine-5'-diphospho)-2-C-methyl-D-erythritol kinase</fullName>
    </alternativeName>
</protein>
<dbReference type="EC" id="2.7.1.148" evidence="1"/>
<dbReference type="EMBL" id="CP001080">
    <property type="protein sequence ID" value="ACD65883.1"/>
    <property type="molecule type" value="Genomic_DNA"/>
</dbReference>
<dbReference type="RefSeq" id="WP_012458972.1">
    <property type="nucleotide sequence ID" value="NC_010730.1"/>
</dbReference>
<dbReference type="SMR" id="B2V7G0"/>
<dbReference type="STRING" id="436114.SYO3AOP1_0238"/>
<dbReference type="KEGG" id="sul:SYO3AOP1_0238"/>
<dbReference type="eggNOG" id="COG1947">
    <property type="taxonomic scope" value="Bacteria"/>
</dbReference>
<dbReference type="HOGENOM" id="CLU_053057_2_0_0"/>
<dbReference type="UniPathway" id="UPA00056">
    <property type="reaction ID" value="UER00094"/>
</dbReference>
<dbReference type="GO" id="GO:0050515">
    <property type="term" value="F:4-(cytidine 5'-diphospho)-2-C-methyl-D-erythritol kinase activity"/>
    <property type="evidence" value="ECO:0007669"/>
    <property type="project" value="UniProtKB-UniRule"/>
</dbReference>
<dbReference type="GO" id="GO:0005524">
    <property type="term" value="F:ATP binding"/>
    <property type="evidence" value="ECO:0007669"/>
    <property type="project" value="UniProtKB-UniRule"/>
</dbReference>
<dbReference type="GO" id="GO:0019288">
    <property type="term" value="P:isopentenyl diphosphate biosynthetic process, methylerythritol 4-phosphate pathway"/>
    <property type="evidence" value="ECO:0007669"/>
    <property type="project" value="UniProtKB-UniRule"/>
</dbReference>
<dbReference type="GO" id="GO:0016114">
    <property type="term" value="P:terpenoid biosynthetic process"/>
    <property type="evidence" value="ECO:0007669"/>
    <property type="project" value="InterPro"/>
</dbReference>
<dbReference type="Gene3D" id="3.30.230.10">
    <property type="match status" value="1"/>
</dbReference>
<dbReference type="Gene3D" id="3.30.70.890">
    <property type="entry name" value="GHMP kinase, C-terminal domain"/>
    <property type="match status" value="1"/>
</dbReference>
<dbReference type="HAMAP" id="MF_00061">
    <property type="entry name" value="IspE"/>
    <property type="match status" value="1"/>
</dbReference>
<dbReference type="InterPro" id="IPR013750">
    <property type="entry name" value="GHMP_kinase_C_dom"/>
</dbReference>
<dbReference type="InterPro" id="IPR036554">
    <property type="entry name" value="GHMP_kinase_C_sf"/>
</dbReference>
<dbReference type="InterPro" id="IPR006204">
    <property type="entry name" value="GHMP_kinase_N_dom"/>
</dbReference>
<dbReference type="InterPro" id="IPR004424">
    <property type="entry name" value="IspE"/>
</dbReference>
<dbReference type="InterPro" id="IPR020568">
    <property type="entry name" value="Ribosomal_Su5_D2-typ_SF"/>
</dbReference>
<dbReference type="InterPro" id="IPR014721">
    <property type="entry name" value="Ribsml_uS5_D2-typ_fold_subgr"/>
</dbReference>
<dbReference type="NCBIfam" id="TIGR00154">
    <property type="entry name" value="ispE"/>
    <property type="match status" value="1"/>
</dbReference>
<dbReference type="NCBIfam" id="NF011205">
    <property type="entry name" value="PRK14611.1"/>
    <property type="match status" value="1"/>
</dbReference>
<dbReference type="PANTHER" id="PTHR43527">
    <property type="entry name" value="4-DIPHOSPHOCYTIDYL-2-C-METHYL-D-ERYTHRITOL KINASE, CHLOROPLASTIC"/>
    <property type="match status" value="1"/>
</dbReference>
<dbReference type="PANTHER" id="PTHR43527:SF2">
    <property type="entry name" value="4-DIPHOSPHOCYTIDYL-2-C-METHYL-D-ERYTHRITOL KINASE, CHLOROPLASTIC"/>
    <property type="match status" value="1"/>
</dbReference>
<dbReference type="Pfam" id="PF08544">
    <property type="entry name" value="GHMP_kinases_C"/>
    <property type="match status" value="1"/>
</dbReference>
<dbReference type="Pfam" id="PF00288">
    <property type="entry name" value="GHMP_kinases_N"/>
    <property type="match status" value="1"/>
</dbReference>
<dbReference type="PIRSF" id="PIRSF010376">
    <property type="entry name" value="IspE"/>
    <property type="match status" value="1"/>
</dbReference>
<dbReference type="SUPFAM" id="SSF55060">
    <property type="entry name" value="GHMP Kinase, C-terminal domain"/>
    <property type="match status" value="1"/>
</dbReference>
<dbReference type="SUPFAM" id="SSF54211">
    <property type="entry name" value="Ribosomal protein S5 domain 2-like"/>
    <property type="match status" value="1"/>
</dbReference>
<gene>
    <name evidence="1" type="primary">ispE</name>
    <name type="ordered locus">SYO3AOP1_0238</name>
</gene>
<evidence type="ECO:0000255" key="1">
    <source>
        <dbReference type="HAMAP-Rule" id="MF_00061"/>
    </source>
</evidence>
<sequence length="275" mass="30915">MEILYSPAKINLGLWIVDKRPDGYHEIFTLYHTLDFYDRIIIQEHPFLEVKTSMPEIKQEENIVYKAISLFESYTGIEQNLQVIIEKNIPVGGGLGGGSSNAATVLNYLNKKHDNILPEEKLFEIAVKLGADVPFFLKGGFAIGEGIGEKLTFLPKTLNEEIFIIYPNIKSDTKTVYSKVDKSILTNKGDLNIILSLINEYDIKKLEAYIENKLGNIALDLYPEIKEAYDFLNYLGFSPKVSGSGSCVYVIGRPTAEVEKAAAIKGWRLIKTKLK</sequence>
<accession>B2V7G0</accession>
<feature type="chain" id="PRO_1000092117" description="4-diphosphocytidyl-2-C-methyl-D-erythritol kinase">
    <location>
        <begin position="1"/>
        <end position="275"/>
    </location>
</feature>
<feature type="active site" evidence="1">
    <location>
        <position position="9"/>
    </location>
</feature>
<feature type="active site" evidence="1">
    <location>
        <position position="132"/>
    </location>
</feature>
<feature type="binding site" evidence="1">
    <location>
        <begin position="90"/>
        <end position="100"/>
    </location>
    <ligand>
        <name>ATP</name>
        <dbReference type="ChEBI" id="CHEBI:30616"/>
    </ligand>
</feature>
<keyword id="KW-0067">ATP-binding</keyword>
<keyword id="KW-0414">Isoprene biosynthesis</keyword>
<keyword id="KW-0418">Kinase</keyword>
<keyword id="KW-0547">Nucleotide-binding</keyword>
<keyword id="KW-0808">Transferase</keyword>
<organism>
    <name type="scientific">Sulfurihydrogenibium sp. (strain YO3AOP1)</name>
    <dbReference type="NCBI Taxonomy" id="436114"/>
    <lineage>
        <taxon>Bacteria</taxon>
        <taxon>Pseudomonadati</taxon>
        <taxon>Aquificota</taxon>
        <taxon>Aquificia</taxon>
        <taxon>Aquificales</taxon>
        <taxon>Hydrogenothermaceae</taxon>
        <taxon>Sulfurihydrogenibium</taxon>
    </lineage>
</organism>
<reference key="1">
    <citation type="journal article" date="2009" name="J. Bacteriol.">
        <title>Complete and draft genome sequences of six members of the Aquificales.</title>
        <authorList>
            <person name="Reysenbach A.-L."/>
            <person name="Hamamura N."/>
            <person name="Podar M."/>
            <person name="Griffiths E."/>
            <person name="Ferreira S."/>
            <person name="Hochstein R."/>
            <person name="Heidelberg J."/>
            <person name="Johnson J."/>
            <person name="Mead D."/>
            <person name="Pohorille A."/>
            <person name="Sarmiento M."/>
            <person name="Schweighofer K."/>
            <person name="Seshadri R."/>
            <person name="Voytek M.A."/>
        </authorList>
    </citation>
    <scope>NUCLEOTIDE SEQUENCE [LARGE SCALE GENOMIC DNA]</scope>
    <source>
        <strain>YO3AOP1</strain>
    </source>
</reference>